<gene>
    <name type="primary">nuo20.9</name>
    <name type="ORF">NCU01859</name>
</gene>
<name>NUXM_NEUCR</name>
<keyword id="KW-0903">Direct protein sequencing</keyword>
<keyword id="KW-0472">Membrane</keyword>
<keyword id="KW-0496">Mitochondrion</keyword>
<keyword id="KW-0999">Mitochondrion inner membrane</keyword>
<keyword id="KW-0520">NAD</keyword>
<keyword id="KW-0560">Oxidoreductase</keyword>
<keyword id="KW-1185">Reference proteome</keyword>
<keyword id="KW-1278">Translocase</keyword>
<keyword id="KW-0812">Transmembrane</keyword>
<keyword id="KW-1133">Transmembrane helix</keyword>
<keyword id="KW-0830">Ubiquinone</keyword>
<reference key="1">
    <citation type="journal article" date="1992" name="Biochem. J.">
        <title>Primary structure and mitochondrial import in vitro of the 20.9 kDa subunit of complex I from Neurospora crassa.</title>
        <authorList>
            <person name="Azevedo J.E."/>
            <person name="Nehls U."/>
            <person name="Eckerskorn C."/>
            <person name="Heinrich H."/>
            <person name="Rothe H."/>
            <person name="Weiss H."/>
            <person name="Werner S."/>
        </authorList>
    </citation>
    <scope>NUCLEOTIDE SEQUENCE [MRNA]</scope>
    <scope>PROTEIN SEQUENCE OF 138-155</scope>
    <source>
        <strain>ATCC 24698 / 74-OR23-1A / CBS 708.71 / DSM 1257 / FGSC 987</strain>
    </source>
</reference>
<reference key="2">
    <citation type="journal article" date="2003" name="Nature">
        <title>The genome sequence of the filamentous fungus Neurospora crassa.</title>
        <authorList>
            <person name="Galagan J.E."/>
            <person name="Calvo S.E."/>
            <person name="Borkovich K.A."/>
            <person name="Selker E.U."/>
            <person name="Read N.D."/>
            <person name="Jaffe D.B."/>
            <person name="FitzHugh W."/>
            <person name="Ma L.-J."/>
            <person name="Smirnov S."/>
            <person name="Purcell S."/>
            <person name="Rehman B."/>
            <person name="Elkins T."/>
            <person name="Engels R."/>
            <person name="Wang S."/>
            <person name="Nielsen C.B."/>
            <person name="Butler J."/>
            <person name="Endrizzi M."/>
            <person name="Qui D."/>
            <person name="Ianakiev P."/>
            <person name="Bell-Pedersen D."/>
            <person name="Nelson M.A."/>
            <person name="Werner-Washburne M."/>
            <person name="Selitrennikoff C.P."/>
            <person name="Kinsey J.A."/>
            <person name="Braun E.L."/>
            <person name="Zelter A."/>
            <person name="Schulte U."/>
            <person name="Kothe G.O."/>
            <person name="Jedd G."/>
            <person name="Mewes H.-W."/>
            <person name="Staben C."/>
            <person name="Marcotte E."/>
            <person name="Greenberg D."/>
            <person name="Roy A."/>
            <person name="Foley K."/>
            <person name="Naylor J."/>
            <person name="Stange-Thomann N."/>
            <person name="Barrett R."/>
            <person name="Gnerre S."/>
            <person name="Kamal M."/>
            <person name="Kamvysselis M."/>
            <person name="Mauceli E.W."/>
            <person name="Bielke C."/>
            <person name="Rudd S."/>
            <person name="Frishman D."/>
            <person name="Krystofova S."/>
            <person name="Rasmussen C."/>
            <person name="Metzenberg R.L."/>
            <person name="Perkins D.D."/>
            <person name="Kroken S."/>
            <person name="Cogoni C."/>
            <person name="Macino G."/>
            <person name="Catcheside D.E.A."/>
            <person name="Li W."/>
            <person name="Pratt R.J."/>
            <person name="Osmani S.A."/>
            <person name="DeSouza C.P.C."/>
            <person name="Glass N.L."/>
            <person name="Orbach M.J."/>
            <person name="Berglund J.A."/>
            <person name="Voelker R."/>
            <person name="Yarden O."/>
            <person name="Plamann M."/>
            <person name="Seiler S."/>
            <person name="Dunlap J.C."/>
            <person name="Radford A."/>
            <person name="Aramayo R."/>
            <person name="Natvig D.O."/>
            <person name="Alex L.A."/>
            <person name="Mannhaupt G."/>
            <person name="Ebbole D.J."/>
            <person name="Freitag M."/>
            <person name="Paulsen I."/>
            <person name="Sachs M.S."/>
            <person name="Lander E.S."/>
            <person name="Nusbaum C."/>
            <person name="Birren B.W."/>
        </authorList>
    </citation>
    <scope>NUCLEOTIDE SEQUENCE [LARGE SCALE GENOMIC DNA]</scope>
    <source>
        <strain>ATCC 24698 / 74-OR23-1A / CBS 708.71 / DSM 1257 / FGSC 987</strain>
    </source>
</reference>
<feature type="chain" id="PRO_0000118782" description="NADH-ubiquinone oxidoreductase 20.9 kDa subunit">
    <location>
        <begin position="1"/>
        <end position="189"/>
    </location>
</feature>
<feature type="transmembrane region" description="Helical" evidence="1">
    <location>
        <begin position="73"/>
        <end position="88"/>
    </location>
</feature>
<comment type="function">
    <text>Transfer of electrons from NADH to the respiratory chain. The immediate electron acceptor for the enzyme is believed to be ubiquinone.</text>
</comment>
<comment type="catalytic activity">
    <reaction>
        <text>a ubiquinone + NADH + 5 H(+)(in) = a ubiquinol + NAD(+) + 4 H(+)(out)</text>
        <dbReference type="Rhea" id="RHEA:29091"/>
        <dbReference type="Rhea" id="RHEA-COMP:9565"/>
        <dbReference type="Rhea" id="RHEA-COMP:9566"/>
        <dbReference type="ChEBI" id="CHEBI:15378"/>
        <dbReference type="ChEBI" id="CHEBI:16389"/>
        <dbReference type="ChEBI" id="CHEBI:17976"/>
        <dbReference type="ChEBI" id="CHEBI:57540"/>
        <dbReference type="ChEBI" id="CHEBI:57945"/>
        <dbReference type="EC" id="7.1.1.2"/>
    </reaction>
</comment>
<comment type="subunit">
    <text>Complex I is composed of about 40 different subunits.</text>
</comment>
<comment type="subcellular location">
    <subcellularLocation>
        <location evidence="2">Mitochondrion inner membrane</location>
        <topology evidence="2">Single-pass membrane protein</topology>
    </subcellularLocation>
</comment>
<comment type="PTM">
    <text>The N-terminus is blocked.</text>
</comment>
<sequence>MSSTSSPTYTISKTLNTNYPLIDNDPHFRRVIGYARPSDYVHGTVAGAAGPGLLYLMEKMAPSGVGKGGFPKAMRLATAVGFFGGFLYFYQRSILRFYGMSENAREVQMDMREMVDKVKAGQPLYGVSTLPVDVQGMAARQSRYSALFFAVLPWFNFVNHNQHGVDTAKYYQQAERELEAERLGKGSSS</sequence>
<evidence type="ECO:0000255" key="1"/>
<evidence type="ECO:0000305" key="2"/>
<organism>
    <name type="scientific">Neurospora crassa (strain ATCC 24698 / 74-OR23-1A / CBS 708.71 / DSM 1257 / FGSC 987)</name>
    <dbReference type="NCBI Taxonomy" id="367110"/>
    <lineage>
        <taxon>Eukaryota</taxon>
        <taxon>Fungi</taxon>
        <taxon>Dikarya</taxon>
        <taxon>Ascomycota</taxon>
        <taxon>Pezizomycotina</taxon>
        <taxon>Sordariomycetes</taxon>
        <taxon>Sordariomycetidae</taxon>
        <taxon>Sordariales</taxon>
        <taxon>Sordariaceae</taxon>
        <taxon>Neurospora</taxon>
    </lineage>
</organism>
<dbReference type="EC" id="7.1.1.2"/>
<dbReference type="EMBL" id="X60829">
    <property type="protein sequence ID" value="CAA43221.1"/>
    <property type="molecule type" value="mRNA"/>
</dbReference>
<dbReference type="EMBL" id="CM002236">
    <property type="protein sequence ID" value="EAA36254.3"/>
    <property type="molecule type" value="Genomic_DNA"/>
</dbReference>
<dbReference type="PIR" id="S27171">
    <property type="entry name" value="S27171"/>
</dbReference>
<dbReference type="RefSeq" id="XP_965490.3">
    <property type="nucleotide sequence ID" value="XM_960397.3"/>
</dbReference>
<dbReference type="SMR" id="Q02854"/>
<dbReference type="STRING" id="367110.Q02854"/>
<dbReference type="TCDB" id="3.D.1.6.2">
    <property type="family name" value="the h+ or na+-translocating nadh dehydrogenase (ndh) family"/>
</dbReference>
<dbReference type="PaxDb" id="5141-EFNCRP00000001025"/>
<dbReference type="EnsemblFungi" id="EAA36254">
    <property type="protein sequence ID" value="EAA36254"/>
    <property type="gene ID" value="NCU01859"/>
</dbReference>
<dbReference type="GeneID" id="3881668"/>
<dbReference type="KEGG" id="ncr:NCU01859"/>
<dbReference type="VEuPathDB" id="FungiDB:NCU01859"/>
<dbReference type="HOGENOM" id="CLU_087364_0_0_1"/>
<dbReference type="InParanoid" id="Q02854"/>
<dbReference type="OrthoDB" id="196140at2759"/>
<dbReference type="Proteomes" id="UP000001805">
    <property type="component" value="Chromosome 1, Linkage Group I"/>
</dbReference>
<dbReference type="GO" id="GO:0005743">
    <property type="term" value="C:mitochondrial inner membrane"/>
    <property type="evidence" value="ECO:0007669"/>
    <property type="project" value="UniProtKB-SubCell"/>
</dbReference>
<dbReference type="GO" id="GO:0045271">
    <property type="term" value="C:respiratory chain complex I"/>
    <property type="evidence" value="ECO:0000318"/>
    <property type="project" value="GO_Central"/>
</dbReference>
<dbReference type="GO" id="GO:0008137">
    <property type="term" value="F:NADH dehydrogenase (ubiquinone) activity"/>
    <property type="evidence" value="ECO:0007669"/>
    <property type="project" value="UniProtKB-EC"/>
</dbReference>
<dbReference type="InterPro" id="IPR053229">
    <property type="entry name" value="NADH-Q_oxidrdct_subunit"/>
</dbReference>
<dbReference type="InterPro" id="IPR024549">
    <property type="entry name" value="NADH-UbQ_OxRdtase_su21_C_fun"/>
</dbReference>
<dbReference type="InterPro" id="IPR019721">
    <property type="entry name" value="NADH-UbQ_OxRdtase_su21_N"/>
</dbReference>
<dbReference type="PANTHER" id="PTHR34062:SF1">
    <property type="entry name" value="NADH-UBIQUINONE OXIDOREDUCTASE 21KDA SUBUNIT N-TERMINAL DOMAIN-CONTAINING PROTEIN"/>
    <property type="match status" value="1"/>
</dbReference>
<dbReference type="PANTHER" id="PTHR34062">
    <property type="entry name" value="OXIDOREDUCTASE 21 KDA SUBUNIT, PUTATIVE (AFU_ORTHOLOGUE AFUA_4G04750)-RELATED"/>
    <property type="match status" value="1"/>
</dbReference>
<dbReference type="Pfam" id="PF10785">
    <property type="entry name" value="NADH-u_ox-rdase"/>
    <property type="match status" value="1"/>
</dbReference>
<dbReference type="Pfam" id="PF12853">
    <property type="entry name" value="NADH_u_ox_C"/>
    <property type="match status" value="1"/>
</dbReference>
<proteinExistence type="evidence at protein level"/>
<protein>
    <recommendedName>
        <fullName>NADH-ubiquinone oxidoreductase 20.9 kDa subunit</fullName>
        <ecNumber>7.1.1.2</ecNumber>
    </recommendedName>
    <alternativeName>
        <fullName>Complex I-20.9kD</fullName>
        <shortName>CI-20.9kD</shortName>
    </alternativeName>
</protein>
<accession>Q02854</accession>
<accession>Q7SHE7</accession>